<organism>
    <name type="scientific">Oryza sativa subsp. japonica</name>
    <name type="common">Rice</name>
    <dbReference type="NCBI Taxonomy" id="39947"/>
    <lineage>
        <taxon>Eukaryota</taxon>
        <taxon>Viridiplantae</taxon>
        <taxon>Streptophyta</taxon>
        <taxon>Embryophyta</taxon>
        <taxon>Tracheophyta</taxon>
        <taxon>Spermatophyta</taxon>
        <taxon>Magnoliopsida</taxon>
        <taxon>Liliopsida</taxon>
        <taxon>Poales</taxon>
        <taxon>Poaceae</taxon>
        <taxon>BOP clade</taxon>
        <taxon>Oryzoideae</taxon>
        <taxon>Oryzeae</taxon>
        <taxon>Oryzinae</taxon>
        <taxon>Oryza</taxon>
        <taxon>Oryza sativa</taxon>
    </lineage>
</organism>
<proteinExistence type="evidence at protein level"/>
<reference key="1">
    <citation type="journal article" date="1994" name="Plant Physiol.">
        <title>Nucleotide sequence of a rice acidic ribosomal phosphoprotein P0 cDNA.</title>
        <authorList>
            <person name="Hihara Y."/>
            <person name="Umeda M."/>
            <person name="Hara C."/>
            <person name="Toriyama K."/>
            <person name="Uchimiya H."/>
        </authorList>
    </citation>
    <scope>NUCLEOTIDE SEQUENCE [MRNA]</scope>
    <source>
        <tissue>Anther</tissue>
    </source>
</reference>
<reference key="2">
    <citation type="journal article" date="2005" name="Nature">
        <title>The map-based sequence of the rice genome.</title>
        <authorList>
            <consortium name="International rice genome sequencing project (IRGSP)"/>
        </authorList>
    </citation>
    <scope>NUCLEOTIDE SEQUENCE [LARGE SCALE GENOMIC DNA]</scope>
    <source>
        <strain>cv. Nipponbare</strain>
    </source>
</reference>
<reference key="3">
    <citation type="journal article" date="2008" name="Nucleic Acids Res.">
        <title>The rice annotation project database (RAP-DB): 2008 update.</title>
        <authorList>
            <consortium name="The rice annotation project (RAP)"/>
        </authorList>
    </citation>
    <scope>GENOME REANNOTATION</scope>
    <source>
        <strain>cv. Nipponbare</strain>
    </source>
</reference>
<reference key="4">
    <citation type="journal article" date="2013" name="Rice">
        <title>Improvement of the Oryza sativa Nipponbare reference genome using next generation sequence and optical map data.</title>
        <authorList>
            <person name="Kawahara Y."/>
            <person name="de la Bastide M."/>
            <person name="Hamilton J.P."/>
            <person name="Kanamori H."/>
            <person name="McCombie W.R."/>
            <person name="Ouyang S."/>
            <person name="Schwartz D.C."/>
            <person name="Tanaka T."/>
            <person name="Wu J."/>
            <person name="Zhou S."/>
            <person name="Childs K.L."/>
            <person name="Davidson R.M."/>
            <person name="Lin H."/>
            <person name="Quesada-Ocampo L."/>
            <person name="Vaillancourt B."/>
            <person name="Sakai H."/>
            <person name="Lee S.S."/>
            <person name="Kim J."/>
            <person name="Numa H."/>
            <person name="Itoh T."/>
            <person name="Buell C.R."/>
            <person name="Matsumoto T."/>
        </authorList>
    </citation>
    <scope>GENOME REANNOTATION</scope>
    <source>
        <strain>cv. Nipponbare</strain>
    </source>
</reference>
<reference key="5">
    <citation type="journal article" date="2003" name="Science">
        <title>Collection, mapping, and annotation of over 28,000 cDNA clones from japonica rice.</title>
        <authorList>
            <consortium name="The rice full-length cDNA consortium"/>
        </authorList>
    </citation>
    <scope>NUCLEOTIDE SEQUENCE [LARGE SCALE MRNA]</scope>
    <source>
        <strain>cv. Nipponbare</strain>
    </source>
</reference>
<reference key="6">
    <citation type="journal article" date="2004" name="Nucleic Acids Res.">
        <title>Rice proteome database based on two-dimensional polyacrylamide gel electrophoresis: its status in 2003.</title>
        <authorList>
            <person name="Komatsu S."/>
            <person name="Kojima K."/>
            <person name="Suzuki K."/>
            <person name="Ozaki K."/>
            <person name="Higo K."/>
        </authorList>
    </citation>
    <scope>PROTEIN SEQUENCE OF 2-9</scope>
    <source>
        <strain>cv. Nipponbare</strain>
    </source>
</reference>
<reference key="7">
    <citation type="journal article" date="2015" name="BMC Plant Biol.">
        <title>The OsSec18 complex interacts with P0(P1-P2)2 to regulate vacuolar morphology in rice endosperm cell.</title>
        <authorList>
            <person name="Sun Y."/>
            <person name="Ning T."/>
            <person name="Liu Z."/>
            <person name="Pang J."/>
            <person name="Jiang D."/>
            <person name="Guo Z."/>
            <person name="Song G."/>
            <person name="Yang D."/>
        </authorList>
    </citation>
    <scope>SUBUNIT</scope>
    <scope>INTERACTION WITH NSF</scope>
    <scope>TISSUE SPECIFICITY</scope>
</reference>
<comment type="function">
    <text evidence="6">Ribosomal protein P0 is the functional equivalent of E.coli protein L10.</text>
</comment>
<comment type="subunit">
    <text evidence="4">P0 forms a pentameric complex by interaction with dimers of P1 and P2 (PubMed:25848690). Interacts with NSF (PubMed:25848690).</text>
</comment>
<comment type="tissue specificity">
    <text evidence="4">Highly expressed in stems, inflorescences and immature seeds (at protein level) (PubMed:25848690). Expressed in leaves and mature seeds (at protein level) (PubMed:25848690).</text>
</comment>
<comment type="PTM">
    <text evidence="1">Phosphorylated.</text>
</comment>
<comment type="similarity">
    <text evidence="6">Belongs to the universal ribosomal protein uL10 family.</text>
</comment>
<comment type="sequence caution" evidence="6">
    <conflict type="erroneous gene model prediction">
        <sequence resource="EMBL-CDS" id="BAD09642"/>
    </conflict>
</comment>
<gene>
    <name evidence="5" type="primary">60SP0</name>
    <name evidence="8" type="ordered locus">Os08g0130500</name>
    <name evidence="6" type="ordered locus">LOC_Os08g03640</name>
    <name evidence="7" type="ORF">P0582D05.130-1</name>
</gene>
<evidence type="ECO:0000250" key="1"/>
<evidence type="ECO:0000256" key="2">
    <source>
        <dbReference type="SAM" id="MobiDB-lite"/>
    </source>
</evidence>
<evidence type="ECO:0000269" key="3">
    <source>
    </source>
</evidence>
<evidence type="ECO:0000269" key="4">
    <source>
    </source>
</evidence>
<evidence type="ECO:0000303" key="5">
    <source>
    </source>
</evidence>
<evidence type="ECO:0000305" key="6"/>
<evidence type="ECO:0000312" key="7">
    <source>
        <dbReference type="EMBL" id="BAC66723.1"/>
    </source>
</evidence>
<evidence type="ECO:0000312" key="8">
    <source>
        <dbReference type="EMBL" id="BAT03696.1"/>
    </source>
</evidence>
<name>RLA0_ORYSJ</name>
<sequence>MAIKRTKAEKKVAYDKKLCQLLDEYTKVLIAVADNVGSNQLQEIRKGLRGDSIVLMGKNTLIRRCIKVHADNTGNKEFLELMPLLVGNVGLIFTKGDLKEVREEVAKYKVGAPARVGLVAPVDVVVPPGNTGLDPSQTSFFQVLNIPTKINKGTVEIITPVELIKKGDKVGSSESALLAKLGIRPFSYGLVITNVYDSGSVFSPEVLDLTEDDLMEKFASGVSMVASVSLAISYPTIAAAPHMFLNGYKNVLAVAVETEYSYPHADKIKEYLKDPSKFAVAAPVAADSGAAAPSAAKEEEKKEEPEEESDGDLGMSLFD</sequence>
<dbReference type="EMBL" id="D21130">
    <property type="protein sequence ID" value="BAA04668.1"/>
    <property type="molecule type" value="mRNA"/>
</dbReference>
<dbReference type="EMBL" id="AP004591">
    <property type="protein sequence ID" value="BAC66723.1"/>
    <property type="molecule type" value="Genomic_DNA"/>
</dbReference>
<dbReference type="EMBL" id="AP004591">
    <property type="protein sequence ID" value="BAD09642.1"/>
    <property type="status" value="ALT_SEQ"/>
    <property type="molecule type" value="Genomic_DNA"/>
</dbReference>
<dbReference type="EMBL" id="AP008214">
    <property type="protein sequence ID" value="BAF22837.1"/>
    <property type="molecule type" value="Genomic_DNA"/>
</dbReference>
<dbReference type="EMBL" id="AP014964">
    <property type="protein sequence ID" value="BAT03696.1"/>
    <property type="molecule type" value="Genomic_DNA"/>
</dbReference>
<dbReference type="EMBL" id="AK064857">
    <property type="protein sequence ID" value="BAG89244.1"/>
    <property type="molecule type" value="mRNA"/>
</dbReference>
<dbReference type="PIR" id="T04309">
    <property type="entry name" value="T04309"/>
</dbReference>
<dbReference type="RefSeq" id="NP_001390409.1">
    <property type="nucleotide sequence ID" value="NM_001403480.1"/>
</dbReference>
<dbReference type="RefSeq" id="XP_015650041.1">
    <property type="nucleotide sequence ID" value="XM_015794555.1"/>
</dbReference>
<dbReference type="SMR" id="P41095"/>
<dbReference type="FunCoup" id="P41095">
    <property type="interactions" value="2371"/>
</dbReference>
<dbReference type="STRING" id="39947.P41095"/>
<dbReference type="iPTMnet" id="P41095"/>
<dbReference type="PaxDb" id="39947-P41095"/>
<dbReference type="EnsemblPlants" id="Os08t0130500-01">
    <property type="protein sequence ID" value="Os08t0130500-01"/>
    <property type="gene ID" value="Os08g0130500"/>
</dbReference>
<dbReference type="GeneID" id="4344590"/>
<dbReference type="Gramene" id="Os08t0130500-01">
    <property type="protein sequence ID" value="Os08t0130500-01"/>
    <property type="gene ID" value="Os08g0130500"/>
</dbReference>
<dbReference type="KEGG" id="dosa:Os08g0130500"/>
<dbReference type="eggNOG" id="KOG0815">
    <property type="taxonomic scope" value="Eukaryota"/>
</dbReference>
<dbReference type="HOGENOM" id="CLU_053173_1_1_1"/>
<dbReference type="InParanoid" id="P41095"/>
<dbReference type="OMA" id="DMNPFKL"/>
<dbReference type="OrthoDB" id="10259902at2759"/>
<dbReference type="Proteomes" id="UP000000763">
    <property type="component" value="Chromosome 8"/>
</dbReference>
<dbReference type="Proteomes" id="UP000059680">
    <property type="component" value="Chromosome 8"/>
</dbReference>
<dbReference type="ExpressionAtlas" id="P41095">
    <property type="expression patterns" value="baseline and differential"/>
</dbReference>
<dbReference type="GO" id="GO:0022625">
    <property type="term" value="C:cytosolic large ribosomal subunit"/>
    <property type="evidence" value="ECO:0000318"/>
    <property type="project" value="GO_Central"/>
</dbReference>
<dbReference type="GO" id="GO:0070180">
    <property type="term" value="F:large ribosomal subunit rRNA binding"/>
    <property type="evidence" value="ECO:0000318"/>
    <property type="project" value="GO_Central"/>
</dbReference>
<dbReference type="GO" id="GO:0003735">
    <property type="term" value="F:structural constituent of ribosome"/>
    <property type="evidence" value="ECO:0000318"/>
    <property type="project" value="GO_Central"/>
</dbReference>
<dbReference type="GO" id="GO:0002181">
    <property type="term" value="P:cytoplasmic translation"/>
    <property type="evidence" value="ECO:0000318"/>
    <property type="project" value="GO_Central"/>
</dbReference>
<dbReference type="GO" id="GO:0042254">
    <property type="term" value="P:ribosome biogenesis"/>
    <property type="evidence" value="ECO:0007669"/>
    <property type="project" value="InterPro"/>
</dbReference>
<dbReference type="CDD" id="cd05795">
    <property type="entry name" value="Ribosomal_P0_L10e"/>
    <property type="match status" value="1"/>
</dbReference>
<dbReference type="FunFam" id="3.90.105.20:FF:000001">
    <property type="entry name" value="60S acidic ribosomal protein P0"/>
    <property type="match status" value="1"/>
</dbReference>
<dbReference type="Gene3D" id="3.30.70.1730">
    <property type="match status" value="1"/>
</dbReference>
<dbReference type="Gene3D" id="3.90.105.20">
    <property type="match status" value="1"/>
</dbReference>
<dbReference type="InterPro" id="IPR050323">
    <property type="entry name" value="Ribosomal_protein_uL10"/>
</dbReference>
<dbReference type="InterPro" id="IPR001790">
    <property type="entry name" value="Ribosomal_uL10"/>
</dbReference>
<dbReference type="InterPro" id="IPR040637">
    <property type="entry name" value="Ribosomal_uL10-like_insert"/>
</dbReference>
<dbReference type="InterPro" id="IPR043164">
    <property type="entry name" value="Ribosomal_uL10-like_insert_sf"/>
</dbReference>
<dbReference type="InterPro" id="IPR043141">
    <property type="entry name" value="Ribosomal_uL10-like_sf"/>
</dbReference>
<dbReference type="InterPro" id="IPR030670">
    <property type="entry name" value="uL10_eukaryotes"/>
</dbReference>
<dbReference type="PANTHER" id="PTHR45699">
    <property type="entry name" value="60S ACIDIC RIBOSOMAL PROTEIN P0"/>
    <property type="match status" value="1"/>
</dbReference>
<dbReference type="PANTHER" id="PTHR45699:SF3">
    <property type="entry name" value="LARGE RIBOSOMAL SUBUNIT PROTEIN UL10"/>
    <property type="match status" value="1"/>
</dbReference>
<dbReference type="Pfam" id="PF00428">
    <property type="entry name" value="Ribosomal_60s"/>
    <property type="match status" value="1"/>
</dbReference>
<dbReference type="Pfam" id="PF00466">
    <property type="entry name" value="Ribosomal_L10"/>
    <property type="match status" value="1"/>
</dbReference>
<dbReference type="Pfam" id="PF17777">
    <property type="entry name" value="RL10P_insert"/>
    <property type="match status" value="1"/>
</dbReference>
<dbReference type="PIRSF" id="PIRSF039087">
    <property type="entry name" value="L10E"/>
    <property type="match status" value="1"/>
</dbReference>
<dbReference type="SUPFAM" id="SSF160369">
    <property type="entry name" value="Ribosomal protein L10-like"/>
    <property type="match status" value="1"/>
</dbReference>
<feature type="initiator methionine" description="Removed" evidence="3">
    <location>
        <position position="1"/>
    </location>
</feature>
<feature type="chain" id="PRO_0000154781" description="Large ribosomal subunit protein uL10">
    <location>
        <begin position="2"/>
        <end position="319"/>
    </location>
</feature>
<feature type="region of interest" description="Disordered" evidence="2">
    <location>
        <begin position="286"/>
        <end position="319"/>
    </location>
</feature>
<feature type="compositionally biased region" description="Low complexity" evidence="2">
    <location>
        <begin position="286"/>
        <end position="295"/>
    </location>
</feature>
<accession>P41095</accession>
<accession>Q0J878</accession>
<accession>Q7EZR2</accession>
<accession>Q7EZR7</accession>
<keyword id="KW-0903">Direct protein sequencing</keyword>
<keyword id="KW-0597">Phosphoprotein</keyword>
<keyword id="KW-1185">Reference proteome</keyword>
<keyword id="KW-0687">Ribonucleoprotein</keyword>
<keyword id="KW-0689">Ribosomal protein</keyword>
<protein>
    <recommendedName>
        <fullName evidence="6">Large ribosomal subunit protein uL10</fullName>
    </recommendedName>
    <alternativeName>
        <fullName evidence="5">60S acidic ribosomal protein P0</fullName>
        <shortName evidence="5">Os60SP0p</shortName>
    </alternativeName>
</protein>